<sequence length="934" mass="105930">MSAHDLKLEEIVNAETLRRKLNELADTADESYTSLPMRKVVLQTLKDALASGRANAEDMLMKDGGGTLCAKRLCYLMDTLIDILFEFATTRAYPTRNPSKAENMALVAVGGYGRGGLAQGSDIDLLFLLPYKQTPWGEQVVEYTLYMLWDMGLKVGHSTRNIDECIRLAREDMTIRTALLDARFLTGDKDLFRTLEIRFEEEIVKGTEPEFIQAKLAERDARHRKAGETRYLVEPNVKEGKGGQRDLHTLFWITKYFYRVKTKEELVKLGVLSRAELKLFNKAEDFLWAVRCHMHFATLKAEERLSFDIQPEIAQRLGYTAHPGQNYVERFMKHYFLVAKDVGDLTRIICAALEEQQAKHVPGFNRIFLTFSRRKRKLSDDGAFISENHRINIARPDIFRQDPVNMIRLFHLADRHGLEFHPEAMQSLTRSLKLINADLRENPEANRLFLEILTSPRNPELILRRMNESGVLGKFIPDFGKIVAMMQFNMYHHYTVDEHLLRCIAVLSEIEHGELKTEHPLSNHLITTIKRDRNLLYVTLLLHDIAKGRPEDHSIAGARIARRLCPRFGLTPSETETVEWLVREHLTMSMVAQSRDLNDRKTIIDFADTVQTMERLKLLLILTVCDIKAVGPGIWNGWKGQLLRTLFYETELVLTGGFSELSRAARDKQAREALAERLSDWPKEERDAYLALPYTNYFLTVSLDDQVRHAHFIRDADQQGRALVTMAKPHAFEAVTEITVLAPDHPRLLSVITGACAAAGGNIVDAQIFTTSDGRALDTILISREFDTDDDERRRAERVGKVIEDVLSGKAHLPDMLAKRTKPKKAARAFKVEPRVEINNTLSNKFTVIEVEGLDRPGLLSELTGLISDLSLDIASAHITTFGEKVIDSFYVTDLVGHKISNATRQGNIKRKLLALLGAENGARTNGRSPQAAA</sequence>
<comment type="function">
    <text evidence="1">Modifies, by uridylylation and deuridylylation, the PII regulatory proteins (GlnB and homologs), in response to the nitrogen status of the cell that GlnD senses through the glutamine level. Under low glutamine levels, catalyzes the conversion of the PII proteins and UTP to PII-UMP and PPi, while under higher glutamine levels, GlnD hydrolyzes PII-UMP to PII and UMP (deuridylylation). Thus, controls uridylylation state and activity of the PII proteins, and plays an important role in the regulation of nitrogen assimilation and metabolism.</text>
</comment>
<comment type="catalytic activity">
    <reaction evidence="1">
        <text>[protein-PII]-L-tyrosine + UTP = [protein-PII]-uridylyl-L-tyrosine + diphosphate</text>
        <dbReference type="Rhea" id="RHEA:13673"/>
        <dbReference type="Rhea" id="RHEA-COMP:12147"/>
        <dbReference type="Rhea" id="RHEA-COMP:12148"/>
        <dbReference type="ChEBI" id="CHEBI:33019"/>
        <dbReference type="ChEBI" id="CHEBI:46398"/>
        <dbReference type="ChEBI" id="CHEBI:46858"/>
        <dbReference type="ChEBI" id="CHEBI:90602"/>
        <dbReference type="EC" id="2.7.7.59"/>
    </reaction>
</comment>
<comment type="catalytic activity">
    <reaction evidence="1">
        <text>[protein-PII]-uridylyl-L-tyrosine + H2O = [protein-PII]-L-tyrosine + UMP + H(+)</text>
        <dbReference type="Rhea" id="RHEA:48600"/>
        <dbReference type="Rhea" id="RHEA-COMP:12147"/>
        <dbReference type="Rhea" id="RHEA-COMP:12148"/>
        <dbReference type="ChEBI" id="CHEBI:15377"/>
        <dbReference type="ChEBI" id="CHEBI:15378"/>
        <dbReference type="ChEBI" id="CHEBI:46858"/>
        <dbReference type="ChEBI" id="CHEBI:57865"/>
        <dbReference type="ChEBI" id="CHEBI:90602"/>
    </reaction>
</comment>
<comment type="cofactor">
    <cofactor evidence="1">
        <name>Mg(2+)</name>
        <dbReference type="ChEBI" id="CHEBI:18420"/>
    </cofactor>
</comment>
<comment type="activity regulation">
    <text evidence="1">Uridylyltransferase (UTase) activity is inhibited by glutamine, while glutamine activates uridylyl-removing (UR) activity.</text>
</comment>
<comment type="domain">
    <text evidence="1">Has four distinct domains: an N-terminal nucleotidyltransferase (NT) domain responsible for UTase activity, a central HD domain that encodes UR activity, and two C-terminal ACT domains that seem to have a role in glutamine sensing.</text>
</comment>
<comment type="similarity">
    <text evidence="1">Belongs to the GlnD family.</text>
</comment>
<organism>
    <name type="scientific">Brucella abortus (strain S19)</name>
    <dbReference type="NCBI Taxonomy" id="430066"/>
    <lineage>
        <taxon>Bacteria</taxon>
        <taxon>Pseudomonadati</taxon>
        <taxon>Pseudomonadota</taxon>
        <taxon>Alphaproteobacteria</taxon>
        <taxon>Hyphomicrobiales</taxon>
        <taxon>Brucellaceae</taxon>
        <taxon>Brucella/Ochrobactrum group</taxon>
        <taxon>Brucella</taxon>
    </lineage>
</organism>
<evidence type="ECO:0000255" key="1">
    <source>
        <dbReference type="HAMAP-Rule" id="MF_00277"/>
    </source>
</evidence>
<evidence type="ECO:0000255" key="2">
    <source>
        <dbReference type="PROSITE-ProRule" id="PRU01175"/>
    </source>
</evidence>
<name>GLND_BRUA1</name>
<protein>
    <recommendedName>
        <fullName evidence="1">Bifunctional uridylyltransferase/uridylyl-removing enzyme</fullName>
        <shortName evidence="1">UTase/UR</shortName>
    </recommendedName>
    <alternativeName>
        <fullName evidence="1">Bifunctional [protein-PII] modification enzyme</fullName>
    </alternativeName>
    <alternativeName>
        <fullName evidence="1">Bifunctional nitrogen sensor protein</fullName>
    </alternativeName>
    <domain>
        <recommendedName>
            <fullName evidence="1">[Protein-PII] uridylyltransferase</fullName>
            <shortName evidence="1">PII uridylyltransferase</shortName>
            <shortName evidence="1">UTase</shortName>
            <ecNumber evidence="1">2.7.7.59</ecNumber>
        </recommendedName>
    </domain>
    <domain>
        <recommendedName>
            <fullName evidence="1">[Protein-PII]-UMP uridylyl-removing enzyme</fullName>
            <shortName evidence="1">UR</shortName>
            <ecNumber evidence="1">3.1.4.-</ecNumber>
        </recommendedName>
    </domain>
</protein>
<dbReference type="EC" id="2.7.7.59" evidence="1"/>
<dbReference type="EC" id="3.1.4.-" evidence="1"/>
<dbReference type="EMBL" id="CP000887">
    <property type="protein sequence ID" value="ACD71691.1"/>
    <property type="molecule type" value="Genomic_DNA"/>
</dbReference>
<dbReference type="RefSeq" id="WP_002965392.1">
    <property type="nucleotide sequence ID" value="NC_010742.1"/>
</dbReference>
<dbReference type="SMR" id="B2S8D8"/>
<dbReference type="KEGG" id="bmc:BAbS19_I01350"/>
<dbReference type="HOGENOM" id="CLU_012833_1_0_5"/>
<dbReference type="Proteomes" id="UP000002565">
    <property type="component" value="Chromosome 1"/>
</dbReference>
<dbReference type="GO" id="GO:0008773">
    <property type="term" value="F:[protein-PII] uridylyltransferase activity"/>
    <property type="evidence" value="ECO:0007669"/>
    <property type="project" value="UniProtKB-UniRule"/>
</dbReference>
<dbReference type="GO" id="GO:0008081">
    <property type="term" value="F:phosphoric diester hydrolase activity"/>
    <property type="evidence" value="ECO:0007669"/>
    <property type="project" value="UniProtKB-UniRule"/>
</dbReference>
<dbReference type="GO" id="GO:0006808">
    <property type="term" value="P:regulation of nitrogen utilization"/>
    <property type="evidence" value="ECO:0007669"/>
    <property type="project" value="UniProtKB-UniRule"/>
</dbReference>
<dbReference type="CDD" id="cd04899">
    <property type="entry name" value="ACT_ACR-UUR-like_2"/>
    <property type="match status" value="1"/>
</dbReference>
<dbReference type="CDD" id="cd04900">
    <property type="entry name" value="ACT_UUR-like_1"/>
    <property type="match status" value="1"/>
</dbReference>
<dbReference type="CDD" id="cd00077">
    <property type="entry name" value="HDc"/>
    <property type="match status" value="1"/>
</dbReference>
<dbReference type="CDD" id="cd05401">
    <property type="entry name" value="NT_GlnE_GlnD_like"/>
    <property type="match status" value="1"/>
</dbReference>
<dbReference type="Gene3D" id="3.30.70.260">
    <property type="match status" value="1"/>
</dbReference>
<dbReference type="Gene3D" id="3.30.460.10">
    <property type="entry name" value="Beta Polymerase, domain 2"/>
    <property type="match status" value="1"/>
</dbReference>
<dbReference type="Gene3D" id="1.10.3090.10">
    <property type="entry name" value="cca-adding enzyme, domain 2"/>
    <property type="match status" value="1"/>
</dbReference>
<dbReference type="HAMAP" id="MF_00277">
    <property type="entry name" value="PII_uridylyl_transf"/>
    <property type="match status" value="1"/>
</dbReference>
<dbReference type="InterPro" id="IPR045865">
    <property type="entry name" value="ACT-like_dom_sf"/>
</dbReference>
<dbReference type="InterPro" id="IPR002912">
    <property type="entry name" value="ACT_dom"/>
</dbReference>
<dbReference type="InterPro" id="IPR003607">
    <property type="entry name" value="HD/PDEase_dom"/>
</dbReference>
<dbReference type="InterPro" id="IPR006674">
    <property type="entry name" value="HD_domain"/>
</dbReference>
<dbReference type="InterPro" id="IPR043519">
    <property type="entry name" value="NT_sf"/>
</dbReference>
<dbReference type="InterPro" id="IPR013546">
    <property type="entry name" value="PII_UdlTrfase/GS_AdlTrfase"/>
</dbReference>
<dbReference type="InterPro" id="IPR010043">
    <property type="entry name" value="UTase/UR"/>
</dbReference>
<dbReference type="NCBIfam" id="NF003467">
    <property type="entry name" value="PRK05092.1"/>
    <property type="match status" value="1"/>
</dbReference>
<dbReference type="NCBIfam" id="TIGR01693">
    <property type="entry name" value="UTase_glnD"/>
    <property type="match status" value="1"/>
</dbReference>
<dbReference type="PANTHER" id="PTHR47320">
    <property type="entry name" value="BIFUNCTIONAL URIDYLYLTRANSFERASE/URIDYLYL-REMOVING ENZYME"/>
    <property type="match status" value="1"/>
</dbReference>
<dbReference type="PANTHER" id="PTHR47320:SF1">
    <property type="entry name" value="BIFUNCTIONAL URIDYLYLTRANSFERASE_URIDYLYL-REMOVING ENZYME"/>
    <property type="match status" value="1"/>
</dbReference>
<dbReference type="Pfam" id="PF01842">
    <property type="entry name" value="ACT"/>
    <property type="match status" value="2"/>
</dbReference>
<dbReference type="Pfam" id="PF08335">
    <property type="entry name" value="GlnD_UR_UTase"/>
    <property type="match status" value="1"/>
</dbReference>
<dbReference type="Pfam" id="PF01966">
    <property type="entry name" value="HD"/>
    <property type="match status" value="1"/>
</dbReference>
<dbReference type="PIRSF" id="PIRSF006288">
    <property type="entry name" value="PII_uridyltransf"/>
    <property type="match status" value="1"/>
</dbReference>
<dbReference type="SMART" id="SM00471">
    <property type="entry name" value="HDc"/>
    <property type="match status" value="1"/>
</dbReference>
<dbReference type="SUPFAM" id="SSF55021">
    <property type="entry name" value="ACT-like"/>
    <property type="match status" value="2"/>
</dbReference>
<dbReference type="SUPFAM" id="SSF81301">
    <property type="entry name" value="Nucleotidyltransferase"/>
    <property type="match status" value="1"/>
</dbReference>
<dbReference type="SUPFAM" id="SSF81593">
    <property type="entry name" value="Nucleotidyltransferase substrate binding subunit/domain"/>
    <property type="match status" value="1"/>
</dbReference>
<dbReference type="SUPFAM" id="SSF81891">
    <property type="entry name" value="Poly A polymerase C-terminal region-like"/>
    <property type="match status" value="1"/>
</dbReference>
<dbReference type="PROSITE" id="PS51671">
    <property type="entry name" value="ACT"/>
    <property type="match status" value="2"/>
</dbReference>
<dbReference type="PROSITE" id="PS51831">
    <property type="entry name" value="HD"/>
    <property type="match status" value="1"/>
</dbReference>
<accession>B2S8D8</accession>
<proteinExistence type="inferred from homology"/>
<gene>
    <name evidence="1" type="primary">glnD</name>
    <name type="ordered locus">BAbS19_I01350</name>
</gene>
<feature type="chain" id="PRO_1000114750" description="Bifunctional uridylyltransferase/uridylyl-removing enzyme">
    <location>
        <begin position="1"/>
        <end position="934"/>
    </location>
</feature>
<feature type="domain" description="HD" evidence="2">
    <location>
        <begin position="496"/>
        <end position="613"/>
    </location>
</feature>
<feature type="domain" description="ACT 1" evidence="1">
    <location>
        <begin position="737"/>
        <end position="818"/>
    </location>
</feature>
<feature type="domain" description="ACT 2" evidence="1">
    <location>
        <begin position="848"/>
        <end position="931"/>
    </location>
</feature>
<feature type="region of interest" description="Uridylyltransferase">
    <location>
        <begin position="1"/>
        <end position="379"/>
    </location>
</feature>
<feature type="region of interest" description="Uridylyl-removing">
    <location>
        <begin position="380"/>
        <end position="736"/>
    </location>
</feature>
<keyword id="KW-0378">Hydrolase</keyword>
<keyword id="KW-0460">Magnesium</keyword>
<keyword id="KW-0511">Multifunctional enzyme</keyword>
<keyword id="KW-0548">Nucleotidyltransferase</keyword>
<keyword id="KW-0677">Repeat</keyword>
<keyword id="KW-0808">Transferase</keyword>
<reference key="1">
    <citation type="journal article" date="2008" name="PLoS ONE">
        <title>Genome sequence of Brucella abortus vaccine strain S19 compared to virulent strains yields candidate virulence genes.</title>
        <authorList>
            <person name="Crasta O.R."/>
            <person name="Folkerts O."/>
            <person name="Fei Z."/>
            <person name="Mane S.P."/>
            <person name="Evans C."/>
            <person name="Martino-Catt S."/>
            <person name="Bricker B."/>
            <person name="Yu G."/>
            <person name="Du L."/>
            <person name="Sobral B.W."/>
        </authorList>
    </citation>
    <scope>NUCLEOTIDE SEQUENCE [LARGE SCALE GENOMIC DNA]</scope>
    <source>
        <strain>S19</strain>
    </source>
</reference>